<reference key="1">
    <citation type="journal article" date="2011" name="J. Bacteriol.">
        <title>Comparative genomics of 28 Salmonella enterica isolates: evidence for CRISPR-mediated adaptive sublineage evolution.</title>
        <authorList>
            <person name="Fricke W.F."/>
            <person name="Mammel M.K."/>
            <person name="McDermott P.F."/>
            <person name="Tartera C."/>
            <person name="White D.G."/>
            <person name="Leclerc J.E."/>
            <person name="Ravel J."/>
            <person name="Cebula T.A."/>
        </authorList>
    </citation>
    <scope>NUCLEOTIDE SEQUENCE [LARGE SCALE GENOMIC DNA]</scope>
    <source>
        <strain>SL254</strain>
    </source>
</reference>
<protein>
    <recommendedName>
        <fullName evidence="1">Probable endonuclease 4</fullName>
        <ecNumber evidence="1">3.1.21.2</ecNumber>
    </recommendedName>
    <alternativeName>
        <fullName evidence="1">Endodeoxyribonuclease IV</fullName>
    </alternativeName>
    <alternativeName>
        <fullName evidence="1">Endonuclease IV</fullName>
    </alternativeName>
</protein>
<dbReference type="EC" id="3.1.21.2" evidence="1"/>
<dbReference type="EMBL" id="CP001113">
    <property type="protein sequence ID" value="ACF61189.1"/>
    <property type="molecule type" value="Genomic_DNA"/>
</dbReference>
<dbReference type="RefSeq" id="WP_000873920.1">
    <property type="nucleotide sequence ID" value="NZ_CCMR01000002.1"/>
</dbReference>
<dbReference type="SMR" id="B4SY37"/>
<dbReference type="KEGG" id="see:SNSL254_A2395"/>
<dbReference type="HOGENOM" id="CLU_025885_0_4_6"/>
<dbReference type="Proteomes" id="UP000008824">
    <property type="component" value="Chromosome"/>
</dbReference>
<dbReference type="GO" id="GO:0008833">
    <property type="term" value="F:deoxyribonuclease IV (phage-T4-induced) activity"/>
    <property type="evidence" value="ECO:0007669"/>
    <property type="project" value="UniProtKB-UniRule"/>
</dbReference>
<dbReference type="GO" id="GO:0003677">
    <property type="term" value="F:DNA binding"/>
    <property type="evidence" value="ECO:0007669"/>
    <property type="project" value="InterPro"/>
</dbReference>
<dbReference type="GO" id="GO:0003906">
    <property type="term" value="F:DNA-(apurinic or apyrimidinic site) endonuclease activity"/>
    <property type="evidence" value="ECO:0007669"/>
    <property type="project" value="TreeGrafter"/>
</dbReference>
<dbReference type="GO" id="GO:0008081">
    <property type="term" value="F:phosphoric diester hydrolase activity"/>
    <property type="evidence" value="ECO:0007669"/>
    <property type="project" value="TreeGrafter"/>
</dbReference>
<dbReference type="GO" id="GO:0008270">
    <property type="term" value="F:zinc ion binding"/>
    <property type="evidence" value="ECO:0007669"/>
    <property type="project" value="UniProtKB-UniRule"/>
</dbReference>
<dbReference type="GO" id="GO:0006284">
    <property type="term" value="P:base-excision repair"/>
    <property type="evidence" value="ECO:0007669"/>
    <property type="project" value="TreeGrafter"/>
</dbReference>
<dbReference type="CDD" id="cd00019">
    <property type="entry name" value="AP2Ec"/>
    <property type="match status" value="1"/>
</dbReference>
<dbReference type="FunFam" id="3.20.20.150:FF:000001">
    <property type="entry name" value="Probable endonuclease 4"/>
    <property type="match status" value="1"/>
</dbReference>
<dbReference type="Gene3D" id="3.20.20.150">
    <property type="entry name" value="Divalent-metal-dependent TIM barrel enzymes"/>
    <property type="match status" value="1"/>
</dbReference>
<dbReference type="HAMAP" id="MF_00152">
    <property type="entry name" value="Nfo"/>
    <property type="match status" value="1"/>
</dbReference>
<dbReference type="InterPro" id="IPR001719">
    <property type="entry name" value="AP_endonuc_2"/>
</dbReference>
<dbReference type="InterPro" id="IPR018246">
    <property type="entry name" value="AP_endonuc_F2_Zn_BS"/>
</dbReference>
<dbReference type="InterPro" id="IPR036237">
    <property type="entry name" value="Xyl_isomerase-like_sf"/>
</dbReference>
<dbReference type="InterPro" id="IPR013022">
    <property type="entry name" value="Xyl_isomerase-like_TIM-brl"/>
</dbReference>
<dbReference type="NCBIfam" id="TIGR00587">
    <property type="entry name" value="nfo"/>
    <property type="match status" value="1"/>
</dbReference>
<dbReference type="NCBIfam" id="NF002199">
    <property type="entry name" value="PRK01060.1-4"/>
    <property type="match status" value="1"/>
</dbReference>
<dbReference type="PANTHER" id="PTHR21445:SF0">
    <property type="entry name" value="APURINIC-APYRIMIDINIC ENDONUCLEASE"/>
    <property type="match status" value="1"/>
</dbReference>
<dbReference type="PANTHER" id="PTHR21445">
    <property type="entry name" value="ENDONUCLEASE IV ENDODEOXYRIBONUCLEASE IV"/>
    <property type="match status" value="1"/>
</dbReference>
<dbReference type="Pfam" id="PF01261">
    <property type="entry name" value="AP_endonuc_2"/>
    <property type="match status" value="1"/>
</dbReference>
<dbReference type="SMART" id="SM00518">
    <property type="entry name" value="AP2Ec"/>
    <property type="match status" value="1"/>
</dbReference>
<dbReference type="SUPFAM" id="SSF51658">
    <property type="entry name" value="Xylose isomerase-like"/>
    <property type="match status" value="1"/>
</dbReference>
<dbReference type="PROSITE" id="PS00729">
    <property type="entry name" value="AP_NUCLEASE_F2_1"/>
    <property type="match status" value="1"/>
</dbReference>
<dbReference type="PROSITE" id="PS00730">
    <property type="entry name" value="AP_NUCLEASE_F2_2"/>
    <property type="match status" value="1"/>
</dbReference>
<dbReference type="PROSITE" id="PS00731">
    <property type="entry name" value="AP_NUCLEASE_F2_3"/>
    <property type="match status" value="1"/>
</dbReference>
<dbReference type="PROSITE" id="PS51432">
    <property type="entry name" value="AP_NUCLEASE_F2_4"/>
    <property type="match status" value="1"/>
</dbReference>
<sequence>MKYIGAHVSAAGGLANAPARAAEIGATAFALFTKNQRQWRAAPLTPQVIDDFKIACEKYLFSAAQILPHDSYLINLGHPVSEALEKSRDAFLDEMQRCEQLGLTLLNFHPGSHLMQIAQEDCLARIAESINIALAQTEGVTAVIENTAGQGSNLGFEFEQLAAIIDGVEDKSRVGVCIDTCHAFAAGYDLRTPEACEKTFAEFGKIVGFQYLRGMHLNDAKSAFGSRVDRHHSLGEGNIGHDAFRWIMQDGRFDGIPLILETINPDIWAEEIAWLKAQQIAEAVA</sequence>
<feature type="chain" id="PRO_1000096903" description="Probable endonuclease 4">
    <location>
        <begin position="1"/>
        <end position="285"/>
    </location>
</feature>
<feature type="binding site" evidence="1">
    <location>
        <position position="69"/>
    </location>
    <ligand>
        <name>Zn(2+)</name>
        <dbReference type="ChEBI" id="CHEBI:29105"/>
        <label>1</label>
    </ligand>
</feature>
<feature type="binding site" evidence="1">
    <location>
        <position position="109"/>
    </location>
    <ligand>
        <name>Zn(2+)</name>
        <dbReference type="ChEBI" id="CHEBI:29105"/>
        <label>1</label>
    </ligand>
</feature>
<feature type="binding site" evidence="1">
    <location>
        <position position="145"/>
    </location>
    <ligand>
        <name>Zn(2+)</name>
        <dbReference type="ChEBI" id="CHEBI:29105"/>
        <label>1</label>
    </ligand>
</feature>
<feature type="binding site" evidence="1">
    <location>
        <position position="145"/>
    </location>
    <ligand>
        <name>Zn(2+)</name>
        <dbReference type="ChEBI" id="CHEBI:29105"/>
        <label>2</label>
    </ligand>
</feature>
<feature type="binding site" evidence="1">
    <location>
        <position position="179"/>
    </location>
    <ligand>
        <name>Zn(2+)</name>
        <dbReference type="ChEBI" id="CHEBI:29105"/>
        <label>2</label>
    </ligand>
</feature>
<feature type="binding site" evidence="1">
    <location>
        <position position="182"/>
    </location>
    <ligand>
        <name>Zn(2+)</name>
        <dbReference type="ChEBI" id="CHEBI:29105"/>
        <label>3</label>
    </ligand>
</feature>
<feature type="binding site" evidence="1">
    <location>
        <position position="216"/>
    </location>
    <ligand>
        <name>Zn(2+)</name>
        <dbReference type="ChEBI" id="CHEBI:29105"/>
        <label>2</label>
    </ligand>
</feature>
<feature type="binding site" evidence="1">
    <location>
        <position position="229"/>
    </location>
    <ligand>
        <name>Zn(2+)</name>
        <dbReference type="ChEBI" id="CHEBI:29105"/>
        <label>3</label>
    </ligand>
</feature>
<feature type="binding site" evidence="1">
    <location>
        <position position="231"/>
    </location>
    <ligand>
        <name>Zn(2+)</name>
        <dbReference type="ChEBI" id="CHEBI:29105"/>
        <label>3</label>
    </ligand>
</feature>
<feature type="binding site" evidence="1">
    <location>
        <position position="261"/>
    </location>
    <ligand>
        <name>Zn(2+)</name>
        <dbReference type="ChEBI" id="CHEBI:29105"/>
        <label>2</label>
    </ligand>
</feature>
<comment type="function">
    <text evidence="1">Endonuclease IV plays a role in DNA repair. It cleaves phosphodiester bonds at apurinic or apyrimidinic (AP) sites, generating a 3'-hydroxyl group and a 5'-terminal sugar phosphate.</text>
</comment>
<comment type="catalytic activity">
    <reaction evidence="1">
        <text>Endonucleolytic cleavage to 5'-phosphooligonucleotide end-products.</text>
        <dbReference type="EC" id="3.1.21.2"/>
    </reaction>
</comment>
<comment type="cofactor">
    <cofactor evidence="1">
        <name>Zn(2+)</name>
        <dbReference type="ChEBI" id="CHEBI:29105"/>
    </cofactor>
    <text evidence="1">Binds 3 Zn(2+) ions.</text>
</comment>
<comment type="similarity">
    <text evidence="1">Belongs to the AP endonuclease 2 family.</text>
</comment>
<accession>B4SY37</accession>
<name>END4_SALNS</name>
<proteinExistence type="inferred from homology"/>
<evidence type="ECO:0000255" key="1">
    <source>
        <dbReference type="HAMAP-Rule" id="MF_00152"/>
    </source>
</evidence>
<gene>
    <name evidence="1" type="primary">nfo</name>
    <name type="ordered locus">SNSL254_A2395</name>
</gene>
<keyword id="KW-0227">DNA damage</keyword>
<keyword id="KW-0234">DNA repair</keyword>
<keyword id="KW-0255">Endonuclease</keyword>
<keyword id="KW-0378">Hydrolase</keyword>
<keyword id="KW-0479">Metal-binding</keyword>
<keyword id="KW-0540">Nuclease</keyword>
<keyword id="KW-0862">Zinc</keyword>
<organism>
    <name type="scientific">Salmonella newport (strain SL254)</name>
    <dbReference type="NCBI Taxonomy" id="423368"/>
    <lineage>
        <taxon>Bacteria</taxon>
        <taxon>Pseudomonadati</taxon>
        <taxon>Pseudomonadota</taxon>
        <taxon>Gammaproteobacteria</taxon>
        <taxon>Enterobacterales</taxon>
        <taxon>Enterobacteriaceae</taxon>
        <taxon>Salmonella</taxon>
    </lineage>
</organism>